<sequence>MNVFHDIKETVLAQVAALQAEGRLPEGLETGRVAVEPPREAAHGDMATNAAMVLAKPAGLAPRAVAEMLVEKLVGVDGIVAAETAGPGFINLRLDPKIWRKTLKTVLTLGTAFGASTMGRGAAVNVEFVSANPTGPMHVGHGRGAVFGDALAALLVKAGWAVTREYYVNDAGAQVDSLARALYARYRVAVGDLDEAAFAAMLAAREIEYGGDYLVPVAADIAQADGTRWTTVAESDWLPAFRAIGIERMLALIKEDLAALGVVHDVFTSEQALVRAGRVDEMMTDLESRDLVYVGTLEPPKGKTPDDWEPRPQTLFRATGFGDEVDRPLKKSDGSWTYFASDIAYHHDKFKRGFLGMINVLGADHGGYVKRLKAAVKAVSNGEAELDVKLVQLVKLLDNGEPVKMSKRAGTFITLREVVDEVGKDVVRFIMLTRKNDAALDFDYARVTEKTRDNPVFYVQYAHARACSVARHAAQTFPGRDLSAAALAATADLDLLDADEEMAMVRLLAGWPRLVESAAEAHEPHRVAFYLGEVAAAFHGLWNRGNDNAELRFLLPTDEARSLARLALVQAVASVIASGLEIFGVEPVKEMR</sequence>
<proteinExistence type="inferred from homology"/>
<evidence type="ECO:0000255" key="1">
    <source>
        <dbReference type="HAMAP-Rule" id="MF_00123"/>
    </source>
</evidence>
<keyword id="KW-0030">Aminoacyl-tRNA synthetase</keyword>
<keyword id="KW-0067">ATP-binding</keyword>
<keyword id="KW-0963">Cytoplasm</keyword>
<keyword id="KW-0436">Ligase</keyword>
<keyword id="KW-0547">Nucleotide-binding</keyword>
<keyword id="KW-0648">Protein biosynthesis</keyword>
<keyword id="KW-1185">Reference proteome</keyword>
<comment type="catalytic activity">
    <reaction evidence="1">
        <text>tRNA(Arg) + L-arginine + ATP = L-arginyl-tRNA(Arg) + AMP + diphosphate</text>
        <dbReference type="Rhea" id="RHEA:20301"/>
        <dbReference type="Rhea" id="RHEA-COMP:9658"/>
        <dbReference type="Rhea" id="RHEA-COMP:9673"/>
        <dbReference type="ChEBI" id="CHEBI:30616"/>
        <dbReference type="ChEBI" id="CHEBI:32682"/>
        <dbReference type="ChEBI" id="CHEBI:33019"/>
        <dbReference type="ChEBI" id="CHEBI:78442"/>
        <dbReference type="ChEBI" id="CHEBI:78513"/>
        <dbReference type="ChEBI" id="CHEBI:456215"/>
        <dbReference type="EC" id="6.1.1.19"/>
    </reaction>
</comment>
<comment type="subunit">
    <text evidence="1">Monomer.</text>
</comment>
<comment type="subcellular location">
    <subcellularLocation>
        <location evidence="1">Cytoplasm</location>
    </subcellularLocation>
</comment>
<comment type="similarity">
    <text evidence="1">Belongs to the class-I aminoacyl-tRNA synthetase family.</text>
</comment>
<reference key="1">
    <citation type="journal article" date="2011" name="Stand. Genomic Sci.">
        <title>Complete genome sequence of Rhodospirillum rubrum type strain (S1).</title>
        <authorList>
            <person name="Munk A.C."/>
            <person name="Copeland A."/>
            <person name="Lucas S."/>
            <person name="Lapidus A."/>
            <person name="Del Rio T.G."/>
            <person name="Barry K."/>
            <person name="Detter J.C."/>
            <person name="Hammon N."/>
            <person name="Israni S."/>
            <person name="Pitluck S."/>
            <person name="Brettin T."/>
            <person name="Bruce D."/>
            <person name="Han C."/>
            <person name="Tapia R."/>
            <person name="Gilna P."/>
            <person name="Schmutz J."/>
            <person name="Larimer F."/>
            <person name="Land M."/>
            <person name="Kyrpides N.C."/>
            <person name="Mavromatis K."/>
            <person name="Richardson P."/>
            <person name="Rohde M."/>
            <person name="Goeker M."/>
            <person name="Klenk H.P."/>
            <person name="Zhang Y."/>
            <person name="Roberts G.P."/>
            <person name="Reslewic S."/>
            <person name="Schwartz D.C."/>
        </authorList>
    </citation>
    <scope>NUCLEOTIDE SEQUENCE [LARGE SCALE GENOMIC DNA]</scope>
    <source>
        <strain>ATCC 11170 / ATH 1.1.1 / DSM 467 / LMG 4362 / NCIMB 8255 / S1</strain>
    </source>
</reference>
<organism>
    <name type="scientific">Rhodospirillum rubrum (strain ATCC 11170 / ATH 1.1.1 / DSM 467 / LMG 4362 / NCIMB 8255 / S1)</name>
    <dbReference type="NCBI Taxonomy" id="269796"/>
    <lineage>
        <taxon>Bacteria</taxon>
        <taxon>Pseudomonadati</taxon>
        <taxon>Pseudomonadota</taxon>
        <taxon>Alphaproteobacteria</taxon>
        <taxon>Rhodospirillales</taxon>
        <taxon>Rhodospirillaceae</taxon>
        <taxon>Rhodospirillum</taxon>
    </lineage>
</organism>
<dbReference type="EC" id="6.1.1.19" evidence="1"/>
<dbReference type="EMBL" id="CP000230">
    <property type="protein sequence ID" value="ABC22579.1"/>
    <property type="molecule type" value="Genomic_DNA"/>
</dbReference>
<dbReference type="RefSeq" id="WP_011389532.1">
    <property type="nucleotide sequence ID" value="NC_007643.1"/>
</dbReference>
<dbReference type="RefSeq" id="YP_426866.1">
    <property type="nucleotide sequence ID" value="NC_007643.1"/>
</dbReference>
<dbReference type="SMR" id="Q2RTG6"/>
<dbReference type="STRING" id="269796.Rru_A1779"/>
<dbReference type="EnsemblBacteria" id="ABC22579">
    <property type="protein sequence ID" value="ABC22579"/>
    <property type="gene ID" value="Rru_A1779"/>
</dbReference>
<dbReference type="KEGG" id="rru:Rru_A1779"/>
<dbReference type="PATRIC" id="fig|269796.9.peg.1857"/>
<dbReference type="eggNOG" id="COG0018">
    <property type="taxonomic scope" value="Bacteria"/>
</dbReference>
<dbReference type="HOGENOM" id="CLU_006406_0_1_5"/>
<dbReference type="PhylomeDB" id="Q2RTG6"/>
<dbReference type="Proteomes" id="UP000001929">
    <property type="component" value="Chromosome"/>
</dbReference>
<dbReference type="GO" id="GO:0005737">
    <property type="term" value="C:cytoplasm"/>
    <property type="evidence" value="ECO:0007669"/>
    <property type="project" value="UniProtKB-SubCell"/>
</dbReference>
<dbReference type="GO" id="GO:0004814">
    <property type="term" value="F:arginine-tRNA ligase activity"/>
    <property type="evidence" value="ECO:0007669"/>
    <property type="project" value="UniProtKB-UniRule"/>
</dbReference>
<dbReference type="GO" id="GO:0005524">
    <property type="term" value="F:ATP binding"/>
    <property type="evidence" value="ECO:0007669"/>
    <property type="project" value="UniProtKB-UniRule"/>
</dbReference>
<dbReference type="GO" id="GO:0006420">
    <property type="term" value="P:arginyl-tRNA aminoacylation"/>
    <property type="evidence" value="ECO:0007669"/>
    <property type="project" value="UniProtKB-UniRule"/>
</dbReference>
<dbReference type="CDD" id="cd00671">
    <property type="entry name" value="ArgRS_core"/>
    <property type="match status" value="1"/>
</dbReference>
<dbReference type="Gene3D" id="3.30.1360.70">
    <property type="entry name" value="Arginyl tRNA synthetase N-terminal domain"/>
    <property type="match status" value="1"/>
</dbReference>
<dbReference type="Gene3D" id="3.40.50.620">
    <property type="entry name" value="HUPs"/>
    <property type="match status" value="1"/>
</dbReference>
<dbReference type="Gene3D" id="1.10.730.10">
    <property type="entry name" value="Isoleucyl-tRNA Synthetase, Domain 1"/>
    <property type="match status" value="1"/>
</dbReference>
<dbReference type="HAMAP" id="MF_00123">
    <property type="entry name" value="Arg_tRNA_synth"/>
    <property type="match status" value="1"/>
</dbReference>
<dbReference type="InterPro" id="IPR001412">
    <property type="entry name" value="aa-tRNA-synth_I_CS"/>
</dbReference>
<dbReference type="InterPro" id="IPR001278">
    <property type="entry name" value="Arg-tRNA-ligase"/>
</dbReference>
<dbReference type="InterPro" id="IPR005148">
    <property type="entry name" value="Arg-tRNA-synth_N"/>
</dbReference>
<dbReference type="InterPro" id="IPR036695">
    <property type="entry name" value="Arg-tRNA-synth_N_sf"/>
</dbReference>
<dbReference type="InterPro" id="IPR035684">
    <property type="entry name" value="ArgRS_core"/>
</dbReference>
<dbReference type="InterPro" id="IPR008909">
    <property type="entry name" value="DALR_anticod-bd"/>
</dbReference>
<dbReference type="InterPro" id="IPR014729">
    <property type="entry name" value="Rossmann-like_a/b/a_fold"/>
</dbReference>
<dbReference type="InterPro" id="IPR009080">
    <property type="entry name" value="tRNAsynth_Ia_anticodon-bd"/>
</dbReference>
<dbReference type="NCBIfam" id="TIGR00456">
    <property type="entry name" value="argS"/>
    <property type="match status" value="1"/>
</dbReference>
<dbReference type="PANTHER" id="PTHR11956:SF5">
    <property type="entry name" value="ARGININE--TRNA LIGASE, CYTOPLASMIC"/>
    <property type="match status" value="1"/>
</dbReference>
<dbReference type="PANTHER" id="PTHR11956">
    <property type="entry name" value="ARGINYL-TRNA SYNTHETASE"/>
    <property type="match status" value="1"/>
</dbReference>
<dbReference type="Pfam" id="PF03485">
    <property type="entry name" value="Arg_tRNA_synt_N"/>
    <property type="match status" value="1"/>
</dbReference>
<dbReference type="Pfam" id="PF05746">
    <property type="entry name" value="DALR_1"/>
    <property type="match status" value="1"/>
</dbReference>
<dbReference type="Pfam" id="PF00750">
    <property type="entry name" value="tRNA-synt_1d"/>
    <property type="match status" value="1"/>
</dbReference>
<dbReference type="PRINTS" id="PR01038">
    <property type="entry name" value="TRNASYNTHARG"/>
</dbReference>
<dbReference type="SMART" id="SM01016">
    <property type="entry name" value="Arg_tRNA_synt_N"/>
    <property type="match status" value="1"/>
</dbReference>
<dbReference type="SMART" id="SM00836">
    <property type="entry name" value="DALR_1"/>
    <property type="match status" value="1"/>
</dbReference>
<dbReference type="SUPFAM" id="SSF47323">
    <property type="entry name" value="Anticodon-binding domain of a subclass of class I aminoacyl-tRNA synthetases"/>
    <property type="match status" value="1"/>
</dbReference>
<dbReference type="SUPFAM" id="SSF55190">
    <property type="entry name" value="Arginyl-tRNA synthetase (ArgRS), N-terminal 'additional' domain"/>
    <property type="match status" value="1"/>
</dbReference>
<dbReference type="SUPFAM" id="SSF52374">
    <property type="entry name" value="Nucleotidylyl transferase"/>
    <property type="match status" value="1"/>
</dbReference>
<dbReference type="PROSITE" id="PS00178">
    <property type="entry name" value="AA_TRNA_LIGASE_I"/>
    <property type="match status" value="1"/>
</dbReference>
<feature type="chain" id="PRO_0000242082" description="Arginine--tRNA ligase">
    <location>
        <begin position="1"/>
        <end position="592"/>
    </location>
</feature>
<feature type="short sequence motif" description="'HIGH' region">
    <location>
        <begin position="131"/>
        <end position="141"/>
    </location>
</feature>
<gene>
    <name evidence="1" type="primary">argS</name>
    <name type="ordered locus">Rru_A1779</name>
</gene>
<protein>
    <recommendedName>
        <fullName evidence="1">Arginine--tRNA ligase</fullName>
        <ecNumber evidence="1">6.1.1.19</ecNumber>
    </recommendedName>
    <alternativeName>
        <fullName evidence="1">Arginyl-tRNA synthetase</fullName>
        <shortName evidence="1">ArgRS</shortName>
    </alternativeName>
</protein>
<name>SYR_RHORT</name>
<accession>Q2RTG6</accession>